<keyword id="KW-0007">Acetylation</keyword>
<keyword id="KW-0009">Actin-binding</keyword>
<keyword id="KW-0963">Cytoplasm</keyword>
<keyword id="KW-0206">Cytoskeleton</keyword>
<keyword id="KW-0903">Direct protein sequencing</keyword>
<organism>
    <name type="scientific">Physarum polycephalum</name>
    <name type="common">Slime mold</name>
    <dbReference type="NCBI Taxonomy" id="5791"/>
    <lineage>
        <taxon>Eukaryota</taxon>
        <taxon>Amoebozoa</taxon>
        <taxon>Evosea</taxon>
        <taxon>Eumycetozoa</taxon>
        <taxon>Myxogastria</taxon>
        <taxon>Myxogastromycetidae</taxon>
        <taxon>Physariida</taxon>
        <taxon>Physaraceae</taxon>
        <taxon>Physarum</taxon>
    </lineage>
</organism>
<reference key="1">
    <citation type="journal article" date="1990" name="DNA Cell Biol.">
        <title>Cell-specific expression of a profilin gene family.</title>
        <authorList>
            <person name="Binette F."/>
            <person name="Benard M."/>
            <person name="Laroche A."/>
            <person name="Pierron G."/>
            <person name="Lemieux G."/>
            <person name="Pallotta D."/>
        </authorList>
    </citation>
    <scope>NUCLEOTIDE SEQUENCE [GENOMIC DNA]</scope>
</reference>
<reference key="2">
    <citation type="journal article" date="1990" name="Eur. J. Biochem.">
        <title>Primary structure of profilins from two species of Echinoidea and Physarum polycephalum.</title>
        <authorList>
            <person name="Takagi T."/>
            <person name="Mabuchi I."/>
            <person name="Hosoya H."/>
            <person name="Furuhashi K."/>
            <person name="Hatano S."/>
        </authorList>
    </citation>
    <scope>PROTEIN SEQUENCE OF 2-125</scope>
    <scope>ACETYLATION AT SER-2</scope>
</reference>
<dbReference type="EMBL" id="M38038">
    <property type="protein sequence ID" value="AAD13630.1"/>
    <property type="molecule type" value="Genomic_DNA"/>
</dbReference>
<dbReference type="PIR" id="B35273">
    <property type="entry name" value="B35273"/>
</dbReference>
<dbReference type="PIR" id="S13199">
    <property type="entry name" value="S13199"/>
</dbReference>
<dbReference type="SMR" id="P18322"/>
<dbReference type="iPTMnet" id="P18322"/>
<dbReference type="GO" id="GO:0005938">
    <property type="term" value="C:cell cortex"/>
    <property type="evidence" value="ECO:0007669"/>
    <property type="project" value="TreeGrafter"/>
</dbReference>
<dbReference type="GO" id="GO:0005856">
    <property type="term" value="C:cytoskeleton"/>
    <property type="evidence" value="ECO:0007669"/>
    <property type="project" value="UniProtKB-SubCell"/>
</dbReference>
<dbReference type="GO" id="GO:0003785">
    <property type="term" value="F:actin monomer binding"/>
    <property type="evidence" value="ECO:0007669"/>
    <property type="project" value="TreeGrafter"/>
</dbReference>
<dbReference type="CDD" id="cd00148">
    <property type="entry name" value="PROF"/>
    <property type="match status" value="1"/>
</dbReference>
<dbReference type="FunFam" id="3.30.450.30:FF:000001">
    <property type="entry name" value="Profilin"/>
    <property type="match status" value="1"/>
</dbReference>
<dbReference type="Gene3D" id="3.30.450.30">
    <property type="entry name" value="Dynein light chain 2a, cytoplasmic"/>
    <property type="match status" value="1"/>
</dbReference>
<dbReference type="InterPro" id="IPR048278">
    <property type="entry name" value="PFN"/>
</dbReference>
<dbReference type="InterPro" id="IPR005455">
    <property type="entry name" value="PFN_euk"/>
</dbReference>
<dbReference type="InterPro" id="IPR036140">
    <property type="entry name" value="PFN_sf"/>
</dbReference>
<dbReference type="InterPro" id="IPR027310">
    <property type="entry name" value="Profilin_CS"/>
</dbReference>
<dbReference type="PANTHER" id="PTHR11604">
    <property type="entry name" value="PROFILIN"/>
    <property type="match status" value="1"/>
</dbReference>
<dbReference type="PANTHER" id="PTHR11604:SF0">
    <property type="entry name" value="PROFILIN"/>
    <property type="match status" value="1"/>
</dbReference>
<dbReference type="Pfam" id="PF00235">
    <property type="entry name" value="Profilin"/>
    <property type="match status" value="1"/>
</dbReference>
<dbReference type="PRINTS" id="PR00392">
    <property type="entry name" value="PROFILIN"/>
</dbReference>
<dbReference type="PRINTS" id="PR01640">
    <property type="entry name" value="PROFILINPLNT"/>
</dbReference>
<dbReference type="SMART" id="SM00392">
    <property type="entry name" value="PROF"/>
    <property type="match status" value="1"/>
</dbReference>
<dbReference type="SUPFAM" id="SSF55770">
    <property type="entry name" value="Profilin (actin-binding protein)"/>
    <property type="match status" value="1"/>
</dbReference>
<dbReference type="PROSITE" id="PS00414">
    <property type="entry name" value="PROFILIN"/>
    <property type="match status" value="1"/>
</dbReference>
<evidence type="ECO:0000269" key="1">
    <source>
    </source>
</evidence>
<evidence type="ECO:0000305" key="2"/>
<accession>P18322</accession>
<protein>
    <recommendedName>
        <fullName>Profilin-P</fullName>
    </recommendedName>
</protein>
<sequence length="125" mass="13192">MSWQTYVDEQLVGTGQLDGAIIIGLDGNSWASKNLTLKAGEGQAIAALFKTPANVFASGITINGIKYMGIKGDSRSIYGKKGATGVATVITGQCILIGYYNEKQQPGNAALVVEKLADYLIENGY</sequence>
<proteinExistence type="evidence at protein level"/>
<name>PROF2_PHYPO</name>
<comment type="function">
    <text>Binds to actin and affects the structure of the cytoskeleton. At high concentrations, profilin prevents the polymerization of actin, whereas it enhances it at low concentrations. By binding to PIP2, it inhibits the formation of IP3 and DG.</text>
</comment>
<comment type="subunit">
    <text>Occurs in many kinds of cells as a complex with monomeric actin in a 1:1 ratio.</text>
</comment>
<comment type="subcellular location">
    <subcellularLocation>
        <location>Cytoplasm</location>
        <location>Cytoskeleton</location>
    </subcellularLocation>
</comment>
<comment type="similarity">
    <text evidence="2">Belongs to the profilin family.</text>
</comment>
<feature type="initiator methionine" description="Removed" evidence="1">
    <location>
        <position position="1"/>
    </location>
</feature>
<feature type="chain" id="PRO_0000199601" description="Profilin-P">
    <location>
        <begin position="2"/>
        <end position="125"/>
    </location>
</feature>
<feature type="modified residue" description="N-acetylserine" evidence="1">
    <location>
        <position position="2"/>
    </location>
</feature>
<feature type="sequence conflict" description="In Ref. 1; AAD13630." evidence="2" ref="1">
    <original>D</original>
    <variation>H</variation>
    <location>
        <position position="8"/>
    </location>
</feature>
<feature type="sequence conflict" description="In Ref. 2; AA sequence." evidence="2" ref="2">
    <original>V</original>
    <variation>S</variation>
    <location>
        <position position="86"/>
    </location>
</feature>
<gene>
    <name type="primary">PROP</name>
</gene>